<keyword id="KW-0004">4Fe-4S</keyword>
<keyword id="KW-0408">Iron</keyword>
<keyword id="KW-0411">Iron-sulfur</keyword>
<keyword id="KW-0414">Isoprene biosynthesis</keyword>
<keyword id="KW-0479">Metal-binding</keyword>
<keyword id="KW-0560">Oxidoreductase</keyword>
<evidence type="ECO:0000255" key="1">
    <source>
        <dbReference type="HAMAP-Rule" id="MF_00191"/>
    </source>
</evidence>
<sequence length="316" mass="35037">MEIVLANPRGFCAGVDRAIAIVNRALECFNPPIYVRHEVVHNKFVVDDLRQRGAVFVDELDQVPDDSIVIFSAHGVSKAVQQEAERRGLKVFDATCPLVTKVHIEVTKYAREGTEAILIGHEGHPEVEGTMGQYDKLKGGDIYLVEDEADVAALEVRHPEKLAFVTQTTLSIDDTAKVIDALRAKFPNIQGPRKDDICYATQNRQDAVRDLAEKCDVVLVVGSPNSSNSNRLRELAERMGKAAYLVDNADQLEQSWFNDTCKIGVTAGASAPEILIKQVIQRLQDWGAQAPKELEGREENITFSLPKELRIHVTQA</sequence>
<comment type="function">
    <text evidence="1">Catalyzes the conversion of 1-hydroxy-2-methyl-2-(E)-butenyl 4-diphosphate (HMBPP) into a mixture of isopentenyl diphosphate (IPP) and dimethylallyl diphosphate (DMAPP). Acts in the terminal step of the DOXP/MEP pathway for isoprenoid precursor biosynthesis.</text>
</comment>
<comment type="catalytic activity">
    <reaction evidence="1">
        <text>isopentenyl diphosphate + 2 oxidized [2Fe-2S]-[ferredoxin] + H2O = (2E)-4-hydroxy-3-methylbut-2-enyl diphosphate + 2 reduced [2Fe-2S]-[ferredoxin] + 2 H(+)</text>
        <dbReference type="Rhea" id="RHEA:24488"/>
        <dbReference type="Rhea" id="RHEA-COMP:10000"/>
        <dbReference type="Rhea" id="RHEA-COMP:10001"/>
        <dbReference type="ChEBI" id="CHEBI:15377"/>
        <dbReference type="ChEBI" id="CHEBI:15378"/>
        <dbReference type="ChEBI" id="CHEBI:33737"/>
        <dbReference type="ChEBI" id="CHEBI:33738"/>
        <dbReference type="ChEBI" id="CHEBI:128753"/>
        <dbReference type="ChEBI" id="CHEBI:128769"/>
        <dbReference type="EC" id="1.17.7.4"/>
    </reaction>
</comment>
<comment type="catalytic activity">
    <reaction evidence="1">
        <text>dimethylallyl diphosphate + 2 oxidized [2Fe-2S]-[ferredoxin] + H2O = (2E)-4-hydroxy-3-methylbut-2-enyl diphosphate + 2 reduced [2Fe-2S]-[ferredoxin] + 2 H(+)</text>
        <dbReference type="Rhea" id="RHEA:24825"/>
        <dbReference type="Rhea" id="RHEA-COMP:10000"/>
        <dbReference type="Rhea" id="RHEA-COMP:10001"/>
        <dbReference type="ChEBI" id="CHEBI:15377"/>
        <dbReference type="ChEBI" id="CHEBI:15378"/>
        <dbReference type="ChEBI" id="CHEBI:33737"/>
        <dbReference type="ChEBI" id="CHEBI:33738"/>
        <dbReference type="ChEBI" id="CHEBI:57623"/>
        <dbReference type="ChEBI" id="CHEBI:128753"/>
        <dbReference type="EC" id="1.17.7.4"/>
    </reaction>
</comment>
<comment type="cofactor">
    <cofactor evidence="1">
        <name>[4Fe-4S] cluster</name>
        <dbReference type="ChEBI" id="CHEBI:49883"/>
    </cofactor>
    <text evidence="1">Binds 1 [4Fe-4S] cluster per subunit.</text>
</comment>
<comment type="pathway">
    <text evidence="1">Isoprenoid biosynthesis; dimethylallyl diphosphate biosynthesis; dimethylallyl diphosphate from (2E)-4-hydroxy-3-methylbutenyl diphosphate: step 1/1.</text>
</comment>
<comment type="pathway">
    <text evidence="1">Isoprenoid biosynthesis; isopentenyl diphosphate biosynthesis via DXP pathway; isopentenyl diphosphate from 1-deoxy-D-xylulose 5-phosphate: step 6/6.</text>
</comment>
<comment type="similarity">
    <text evidence="1">Belongs to the IspH family.</text>
</comment>
<dbReference type="EC" id="1.17.7.4" evidence="1"/>
<dbReference type="EMBL" id="CU468230">
    <property type="protein sequence ID" value="CAO99717.1"/>
    <property type="molecule type" value="Genomic_DNA"/>
</dbReference>
<dbReference type="SMR" id="B0VQ53"/>
<dbReference type="KEGG" id="abm:ABSDF0323"/>
<dbReference type="HOGENOM" id="CLU_027486_1_0_6"/>
<dbReference type="UniPathway" id="UPA00056">
    <property type="reaction ID" value="UER00097"/>
</dbReference>
<dbReference type="UniPathway" id="UPA00059">
    <property type="reaction ID" value="UER00105"/>
</dbReference>
<dbReference type="Proteomes" id="UP000001741">
    <property type="component" value="Chromosome"/>
</dbReference>
<dbReference type="GO" id="GO:0051539">
    <property type="term" value="F:4 iron, 4 sulfur cluster binding"/>
    <property type="evidence" value="ECO:0007669"/>
    <property type="project" value="UniProtKB-UniRule"/>
</dbReference>
<dbReference type="GO" id="GO:0051745">
    <property type="term" value="F:4-hydroxy-3-methylbut-2-enyl diphosphate reductase activity"/>
    <property type="evidence" value="ECO:0007669"/>
    <property type="project" value="UniProtKB-UniRule"/>
</dbReference>
<dbReference type="GO" id="GO:0046872">
    <property type="term" value="F:metal ion binding"/>
    <property type="evidence" value="ECO:0007669"/>
    <property type="project" value="UniProtKB-KW"/>
</dbReference>
<dbReference type="GO" id="GO:0050992">
    <property type="term" value="P:dimethylallyl diphosphate biosynthetic process"/>
    <property type="evidence" value="ECO:0007669"/>
    <property type="project" value="UniProtKB-UniRule"/>
</dbReference>
<dbReference type="GO" id="GO:0019288">
    <property type="term" value="P:isopentenyl diphosphate biosynthetic process, methylerythritol 4-phosphate pathway"/>
    <property type="evidence" value="ECO:0007669"/>
    <property type="project" value="UniProtKB-UniRule"/>
</dbReference>
<dbReference type="GO" id="GO:0016114">
    <property type="term" value="P:terpenoid biosynthetic process"/>
    <property type="evidence" value="ECO:0007669"/>
    <property type="project" value="UniProtKB-UniRule"/>
</dbReference>
<dbReference type="CDD" id="cd13944">
    <property type="entry name" value="lytB_ispH"/>
    <property type="match status" value="1"/>
</dbReference>
<dbReference type="Gene3D" id="3.40.50.11270">
    <property type="match status" value="1"/>
</dbReference>
<dbReference type="Gene3D" id="3.40.1010.20">
    <property type="entry name" value="4-hydroxy-3-methylbut-2-enyl diphosphate reductase, catalytic domain"/>
    <property type="match status" value="2"/>
</dbReference>
<dbReference type="HAMAP" id="MF_00191">
    <property type="entry name" value="IspH"/>
    <property type="match status" value="1"/>
</dbReference>
<dbReference type="InterPro" id="IPR003451">
    <property type="entry name" value="LytB/IspH"/>
</dbReference>
<dbReference type="NCBIfam" id="TIGR00216">
    <property type="entry name" value="ispH_lytB"/>
    <property type="match status" value="1"/>
</dbReference>
<dbReference type="NCBIfam" id="NF002188">
    <property type="entry name" value="PRK01045.1-2"/>
    <property type="match status" value="1"/>
</dbReference>
<dbReference type="NCBIfam" id="NF002190">
    <property type="entry name" value="PRK01045.1-4"/>
    <property type="match status" value="1"/>
</dbReference>
<dbReference type="PANTHER" id="PTHR30426">
    <property type="entry name" value="4-HYDROXY-3-METHYLBUT-2-ENYL DIPHOSPHATE REDUCTASE"/>
    <property type="match status" value="1"/>
</dbReference>
<dbReference type="PANTHER" id="PTHR30426:SF0">
    <property type="entry name" value="4-HYDROXY-3-METHYLBUT-2-ENYL DIPHOSPHATE REDUCTASE"/>
    <property type="match status" value="1"/>
</dbReference>
<dbReference type="Pfam" id="PF02401">
    <property type="entry name" value="LYTB"/>
    <property type="match status" value="1"/>
</dbReference>
<feature type="chain" id="PRO_1000098924" description="4-hydroxy-3-methylbut-2-enyl diphosphate reductase">
    <location>
        <begin position="1"/>
        <end position="316"/>
    </location>
</feature>
<feature type="active site" description="Proton donor" evidence="1">
    <location>
        <position position="126"/>
    </location>
</feature>
<feature type="binding site" evidence="1">
    <location>
        <position position="12"/>
    </location>
    <ligand>
        <name>[4Fe-4S] cluster</name>
        <dbReference type="ChEBI" id="CHEBI:49883"/>
    </ligand>
</feature>
<feature type="binding site" evidence="1">
    <location>
        <position position="41"/>
    </location>
    <ligand>
        <name>(2E)-4-hydroxy-3-methylbut-2-enyl diphosphate</name>
        <dbReference type="ChEBI" id="CHEBI:128753"/>
    </ligand>
</feature>
<feature type="binding site" evidence="1">
    <location>
        <position position="41"/>
    </location>
    <ligand>
        <name>dimethylallyl diphosphate</name>
        <dbReference type="ChEBI" id="CHEBI:57623"/>
    </ligand>
</feature>
<feature type="binding site" evidence="1">
    <location>
        <position position="41"/>
    </location>
    <ligand>
        <name>isopentenyl diphosphate</name>
        <dbReference type="ChEBI" id="CHEBI:128769"/>
    </ligand>
</feature>
<feature type="binding site" evidence="1">
    <location>
        <position position="74"/>
    </location>
    <ligand>
        <name>(2E)-4-hydroxy-3-methylbut-2-enyl diphosphate</name>
        <dbReference type="ChEBI" id="CHEBI:128753"/>
    </ligand>
</feature>
<feature type="binding site" evidence="1">
    <location>
        <position position="74"/>
    </location>
    <ligand>
        <name>dimethylallyl diphosphate</name>
        <dbReference type="ChEBI" id="CHEBI:57623"/>
    </ligand>
</feature>
<feature type="binding site" evidence="1">
    <location>
        <position position="74"/>
    </location>
    <ligand>
        <name>isopentenyl diphosphate</name>
        <dbReference type="ChEBI" id="CHEBI:128769"/>
    </ligand>
</feature>
<feature type="binding site" evidence="1">
    <location>
        <position position="96"/>
    </location>
    <ligand>
        <name>[4Fe-4S] cluster</name>
        <dbReference type="ChEBI" id="CHEBI:49883"/>
    </ligand>
</feature>
<feature type="binding site" evidence="1">
    <location>
        <position position="124"/>
    </location>
    <ligand>
        <name>(2E)-4-hydroxy-3-methylbut-2-enyl diphosphate</name>
        <dbReference type="ChEBI" id="CHEBI:128753"/>
    </ligand>
</feature>
<feature type="binding site" evidence="1">
    <location>
        <position position="124"/>
    </location>
    <ligand>
        <name>dimethylallyl diphosphate</name>
        <dbReference type="ChEBI" id="CHEBI:57623"/>
    </ligand>
</feature>
<feature type="binding site" evidence="1">
    <location>
        <position position="124"/>
    </location>
    <ligand>
        <name>isopentenyl diphosphate</name>
        <dbReference type="ChEBI" id="CHEBI:128769"/>
    </ligand>
</feature>
<feature type="binding site" evidence="1">
    <location>
        <position position="168"/>
    </location>
    <ligand>
        <name>(2E)-4-hydroxy-3-methylbut-2-enyl diphosphate</name>
        <dbReference type="ChEBI" id="CHEBI:128753"/>
    </ligand>
</feature>
<feature type="binding site" evidence="1">
    <location>
        <position position="198"/>
    </location>
    <ligand>
        <name>[4Fe-4S] cluster</name>
        <dbReference type="ChEBI" id="CHEBI:49883"/>
    </ligand>
</feature>
<feature type="binding site" evidence="1">
    <location>
        <position position="226"/>
    </location>
    <ligand>
        <name>(2E)-4-hydroxy-3-methylbut-2-enyl diphosphate</name>
        <dbReference type="ChEBI" id="CHEBI:128753"/>
    </ligand>
</feature>
<feature type="binding site" evidence="1">
    <location>
        <position position="226"/>
    </location>
    <ligand>
        <name>dimethylallyl diphosphate</name>
        <dbReference type="ChEBI" id="CHEBI:57623"/>
    </ligand>
</feature>
<feature type="binding site" evidence="1">
    <location>
        <position position="226"/>
    </location>
    <ligand>
        <name>isopentenyl diphosphate</name>
        <dbReference type="ChEBI" id="CHEBI:128769"/>
    </ligand>
</feature>
<feature type="binding site" evidence="1">
    <location>
        <position position="227"/>
    </location>
    <ligand>
        <name>(2E)-4-hydroxy-3-methylbut-2-enyl diphosphate</name>
        <dbReference type="ChEBI" id="CHEBI:128753"/>
    </ligand>
</feature>
<feature type="binding site" evidence="1">
    <location>
        <position position="227"/>
    </location>
    <ligand>
        <name>dimethylallyl diphosphate</name>
        <dbReference type="ChEBI" id="CHEBI:57623"/>
    </ligand>
</feature>
<feature type="binding site" evidence="1">
    <location>
        <position position="227"/>
    </location>
    <ligand>
        <name>isopentenyl diphosphate</name>
        <dbReference type="ChEBI" id="CHEBI:128769"/>
    </ligand>
</feature>
<feature type="binding site" evidence="1">
    <location>
        <position position="228"/>
    </location>
    <ligand>
        <name>(2E)-4-hydroxy-3-methylbut-2-enyl diphosphate</name>
        <dbReference type="ChEBI" id="CHEBI:128753"/>
    </ligand>
</feature>
<feature type="binding site" evidence="1">
    <location>
        <position position="228"/>
    </location>
    <ligand>
        <name>dimethylallyl diphosphate</name>
        <dbReference type="ChEBI" id="CHEBI:57623"/>
    </ligand>
</feature>
<feature type="binding site" evidence="1">
    <location>
        <position position="228"/>
    </location>
    <ligand>
        <name>isopentenyl diphosphate</name>
        <dbReference type="ChEBI" id="CHEBI:128769"/>
    </ligand>
</feature>
<feature type="binding site" evidence="1">
    <location>
        <position position="270"/>
    </location>
    <ligand>
        <name>(2E)-4-hydroxy-3-methylbut-2-enyl diphosphate</name>
        <dbReference type="ChEBI" id="CHEBI:128753"/>
    </ligand>
</feature>
<feature type="binding site" evidence="1">
    <location>
        <position position="270"/>
    </location>
    <ligand>
        <name>dimethylallyl diphosphate</name>
        <dbReference type="ChEBI" id="CHEBI:57623"/>
    </ligand>
</feature>
<feature type="binding site" evidence="1">
    <location>
        <position position="270"/>
    </location>
    <ligand>
        <name>isopentenyl diphosphate</name>
        <dbReference type="ChEBI" id="CHEBI:128769"/>
    </ligand>
</feature>
<protein>
    <recommendedName>
        <fullName evidence="1">4-hydroxy-3-methylbut-2-enyl diphosphate reductase</fullName>
        <shortName evidence="1">HMBPP reductase</shortName>
        <ecNumber evidence="1">1.17.7.4</ecNumber>
    </recommendedName>
</protein>
<reference key="1">
    <citation type="journal article" date="2008" name="PLoS ONE">
        <title>Comparative analysis of Acinetobacters: three genomes for three lifestyles.</title>
        <authorList>
            <person name="Vallenet D."/>
            <person name="Nordmann P."/>
            <person name="Barbe V."/>
            <person name="Poirel L."/>
            <person name="Mangenot S."/>
            <person name="Bataille E."/>
            <person name="Dossat C."/>
            <person name="Gas S."/>
            <person name="Kreimeyer A."/>
            <person name="Lenoble P."/>
            <person name="Oztas S."/>
            <person name="Poulain J."/>
            <person name="Segurens B."/>
            <person name="Robert C."/>
            <person name="Abergel C."/>
            <person name="Claverie J.-M."/>
            <person name="Raoult D."/>
            <person name="Medigue C."/>
            <person name="Weissenbach J."/>
            <person name="Cruveiller S."/>
        </authorList>
    </citation>
    <scope>NUCLEOTIDE SEQUENCE [LARGE SCALE GENOMIC DNA]</scope>
    <source>
        <strain>SDF</strain>
    </source>
</reference>
<gene>
    <name evidence="1" type="primary">ispH</name>
    <name type="ordered locus">ABSDF0323</name>
</gene>
<organism>
    <name type="scientific">Acinetobacter baumannii (strain SDF)</name>
    <dbReference type="NCBI Taxonomy" id="509170"/>
    <lineage>
        <taxon>Bacteria</taxon>
        <taxon>Pseudomonadati</taxon>
        <taxon>Pseudomonadota</taxon>
        <taxon>Gammaproteobacteria</taxon>
        <taxon>Moraxellales</taxon>
        <taxon>Moraxellaceae</taxon>
        <taxon>Acinetobacter</taxon>
        <taxon>Acinetobacter calcoaceticus/baumannii complex</taxon>
    </lineage>
</organism>
<name>ISPH_ACIBS</name>
<accession>B0VQ53</accession>
<proteinExistence type="inferred from homology"/>